<protein>
    <recommendedName>
        <fullName evidence="1">Ribonuclease HII</fullName>
        <shortName evidence="1">RNase HII</shortName>
        <ecNumber evidence="1">3.1.26.4</ecNumber>
    </recommendedName>
</protein>
<dbReference type="EC" id="3.1.26.4" evidence="1"/>
<dbReference type="EMBL" id="CP000699">
    <property type="protein sequence ID" value="ABQ70912.1"/>
    <property type="molecule type" value="Genomic_DNA"/>
</dbReference>
<dbReference type="SMR" id="A5VF46"/>
<dbReference type="STRING" id="392499.Swit_4574"/>
<dbReference type="PaxDb" id="392499-Swit_4574"/>
<dbReference type="KEGG" id="swi:Swit_4574"/>
<dbReference type="eggNOG" id="COG0164">
    <property type="taxonomic scope" value="Bacteria"/>
</dbReference>
<dbReference type="HOGENOM" id="CLU_036532_3_2_5"/>
<dbReference type="OrthoDB" id="9803420at2"/>
<dbReference type="Proteomes" id="UP000001989">
    <property type="component" value="Chromosome"/>
</dbReference>
<dbReference type="GO" id="GO:0005737">
    <property type="term" value="C:cytoplasm"/>
    <property type="evidence" value="ECO:0007669"/>
    <property type="project" value="UniProtKB-SubCell"/>
</dbReference>
<dbReference type="GO" id="GO:0032299">
    <property type="term" value="C:ribonuclease H2 complex"/>
    <property type="evidence" value="ECO:0007669"/>
    <property type="project" value="TreeGrafter"/>
</dbReference>
<dbReference type="GO" id="GO:0030145">
    <property type="term" value="F:manganese ion binding"/>
    <property type="evidence" value="ECO:0007669"/>
    <property type="project" value="UniProtKB-UniRule"/>
</dbReference>
<dbReference type="GO" id="GO:0003723">
    <property type="term" value="F:RNA binding"/>
    <property type="evidence" value="ECO:0007669"/>
    <property type="project" value="InterPro"/>
</dbReference>
<dbReference type="GO" id="GO:0004523">
    <property type="term" value="F:RNA-DNA hybrid ribonuclease activity"/>
    <property type="evidence" value="ECO:0007669"/>
    <property type="project" value="UniProtKB-UniRule"/>
</dbReference>
<dbReference type="GO" id="GO:0043137">
    <property type="term" value="P:DNA replication, removal of RNA primer"/>
    <property type="evidence" value="ECO:0007669"/>
    <property type="project" value="TreeGrafter"/>
</dbReference>
<dbReference type="GO" id="GO:0006298">
    <property type="term" value="P:mismatch repair"/>
    <property type="evidence" value="ECO:0007669"/>
    <property type="project" value="TreeGrafter"/>
</dbReference>
<dbReference type="CDD" id="cd07182">
    <property type="entry name" value="RNase_HII_bacteria_HII_like"/>
    <property type="match status" value="1"/>
</dbReference>
<dbReference type="Gene3D" id="3.30.420.10">
    <property type="entry name" value="Ribonuclease H-like superfamily/Ribonuclease H"/>
    <property type="match status" value="1"/>
</dbReference>
<dbReference type="HAMAP" id="MF_00052_B">
    <property type="entry name" value="RNase_HII_B"/>
    <property type="match status" value="1"/>
</dbReference>
<dbReference type="InterPro" id="IPR022898">
    <property type="entry name" value="RNase_HII"/>
</dbReference>
<dbReference type="InterPro" id="IPR001352">
    <property type="entry name" value="RNase_HII/HIII"/>
</dbReference>
<dbReference type="InterPro" id="IPR024567">
    <property type="entry name" value="RNase_HII/HIII_dom"/>
</dbReference>
<dbReference type="InterPro" id="IPR012337">
    <property type="entry name" value="RNaseH-like_sf"/>
</dbReference>
<dbReference type="InterPro" id="IPR036397">
    <property type="entry name" value="RNaseH_sf"/>
</dbReference>
<dbReference type="NCBIfam" id="NF000595">
    <property type="entry name" value="PRK00015.1-3"/>
    <property type="match status" value="1"/>
</dbReference>
<dbReference type="PANTHER" id="PTHR10954">
    <property type="entry name" value="RIBONUCLEASE H2 SUBUNIT A"/>
    <property type="match status" value="1"/>
</dbReference>
<dbReference type="PANTHER" id="PTHR10954:SF18">
    <property type="entry name" value="RIBONUCLEASE HII"/>
    <property type="match status" value="1"/>
</dbReference>
<dbReference type="Pfam" id="PF01351">
    <property type="entry name" value="RNase_HII"/>
    <property type="match status" value="1"/>
</dbReference>
<dbReference type="SUPFAM" id="SSF53098">
    <property type="entry name" value="Ribonuclease H-like"/>
    <property type="match status" value="1"/>
</dbReference>
<dbReference type="PROSITE" id="PS51975">
    <property type="entry name" value="RNASE_H_2"/>
    <property type="match status" value="1"/>
</dbReference>
<reference key="1">
    <citation type="journal article" date="2010" name="J. Bacteriol.">
        <title>Genome sequence of the dioxin-mineralizing bacterium Sphingomonas wittichii RW1.</title>
        <authorList>
            <person name="Miller T.R."/>
            <person name="Delcher A.L."/>
            <person name="Salzberg S.L."/>
            <person name="Saunders E."/>
            <person name="Detter J.C."/>
            <person name="Halden R.U."/>
        </authorList>
    </citation>
    <scope>NUCLEOTIDE SEQUENCE [LARGE SCALE GENOMIC DNA]</scope>
    <source>
        <strain>DSM 6014 / CCUG 31198 / JCM 15750 / NBRC 105917 / EY 4224 / RW1</strain>
    </source>
</reference>
<evidence type="ECO:0000255" key="1">
    <source>
        <dbReference type="HAMAP-Rule" id="MF_00052"/>
    </source>
</evidence>
<evidence type="ECO:0000255" key="2">
    <source>
        <dbReference type="PROSITE-ProRule" id="PRU01319"/>
    </source>
</evidence>
<keyword id="KW-0963">Cytoplasm</keyword>
<keyword id="KW-0255">Endonuclease</keyword>
<keyword id="KW-0378">Hydrolase</keyword>
<keyword id="KW-0464">Manganese</keyword>
<keyword id="KW-0479">Metal-binding</keyword>
<keyword id="KW-0540">Nuclease</keyword>
<keyword id="KW-1185">Reference proteome</keyword>
<name>RNH2_RHIWR</name>
<comment type="function">
    <text evidence="1">Endonuclease that specifically degrades the RNA of RNA-DNA hybrids.</text>
</comment>
<comment type="catalytic activity">
    <reaction evidence="1">
        <text>Endonucleolytic cleavage to 5'-phosphomonoester.</text>
        <dbReference type="EC" id="3.1.26.4"/>
    </reaction>
</comment>
<comment type="cofactor">
    <cofactor evidence="1">
        <name>Mn(2+)</name>
        <dbReference type="ChEBI" id="CHEBI:29035"/>
    </cofactor>
    <cofactor evidence="1">
        <name>Mg(2+)</name>
        <dbReference type="ChEBI" id="CHEBI:18420"/>
    </cofactor>
    <text evidence="1">Manganese or magnesium. Binds 1 divalent metal ion per monomer in the absence of substrate. May bind a second metal ion after substrate binding.</text>
</comment>
<comment type="subcellular location">
    <subcellularLocation>
        <location evidence="1">Cytoplasm</location>
    </subcellularLocation>
</comment>
<comment type="similarity">
    <text evidence="1">Belongs to the RNase HII family.</text>
</comment>
<gene>
    <name evidence="1" type="primary">rnhB</name>
    <name type="ordered locus">Swit_4574</name>
</gene>
<sequence length="202" mass="21300">MAGPSFDLEIAHPLPLAGVDEAGRGPLAGPVVAAAVILDRGRVPAGIDDSKKLGAEARADLCGKIREVAHVGVGIATVEEIDEINILWASMLAMERAVAALGVEPAMVLVDGNRCPRWTRPSQWVIGGDALCLSIAAASIVAKEERDRMMADYDVHHPGYGWAKNKGYGTPAHLDALARLGPSPLHRRSFAPVAQFSLFPAA</sequence>
<feature type="chain" id="PRO_0000334959" description="Ribonuclease HII">
    <location>
        <begin position="1"/>
        <end position="202"/>
    </location>
</feature>
<feature type="domain" description="RNase H type-2" evidence="2">
    <location>
        <begin position="14"/>
        <end position="202"/>
    </location>
</feature>
<feature type="binding site" evidence="1">
    <location>
        <position position="20"/>
    </location>
    <ligand>
        <name>a divalent metal cation</name>
        <dbReference type="ChEBI" id="CHEBI:60240"/>
    </ligand>
</feature>
<feature type="binding site" evidence="1">
    <location>
        <position position="21"/>
    </location>
    <ligand>
        <name>a divalent metal cation</name>
        <dbReference type="ChEBI" id="CHEBI:60240"/>
    </ligand>
</feature>
<feature type="binding site" evidence="1">
    <location>
        <position position="111"/>
    </location>
    <ligand>
        <name>a divalent metal cation</name>
        <dbReference type="ChEBI" id="CHEBI:60240"/>
    </ligand>
</feature>
<organism>
    <name type="scientific">Rhizorhabdus wittichii (strain DSM 6014 / CCUG 31198 / JCM 15750 / NBRC 105917 / EY 4224 / RW1)</name>
    <name type="common">Sphingomonas wittichii</name>
    <dbReference type="NCBI Taxonomy" id="392499"/>
    <lineage>
        <taxon>Bacteria</taxon>
        <taxon>Pseudomonadati</taxon>
        <taxon>Pseudomonadota</taxon>
        <taxon>Alphaproteobacteria</taxon>
        <taxon>Sphingomonadales</taxon>
        <taxon>Sphingomonadaceae</taxon>
        <taxon>Rhizorhabdus</taxon>
    </lineage>
</organism>
<accession>A5VF46</accession>
<proteinExistence type="inferred from homology"/>